<proteinExistence type="inferred from homology"/>
<organism>
    <name type="scientific">Saccharomyces cerevisiae (strain YJM789)</name>
    <name type="common">Baker's yeast</name>
    <dbReference type="NCBI Taxonomy" id="307796"/>
    <lineage>
        <taxon>Eukaryota</taxon>
        <taxon>Fungi</taxon>
        <taxon>Dikarya</taxon>
        <taxon>Ascomycota</taxon>
        <taxon>Saccharomycotina</taxon>
        <taxon>Saccharomycetes</taxon>
        <taxon>Saccharomycetales</taxon>
        <taxon>Saccharomycetaceae</taxon>
        <taxon>Saccharomyces</taxon>
    </lineage>
</organism>
<reference key="1">
    <citation type="journal article" date="2007" name="Proc. Natl. Acad. Sci. U.S.A.">
        <title>Genome sequencing and comparative analysis of Saccharomyces cerevisiae strain YJM789.</title>
        <authorList>
            <person name="Wei W."/>
            <person name="McCusker J.H."/>
            <person name="Hyman R.W."/>
            <person name="Jones T."/>
            <person name="Ning Y."/>
            <person name="Cao Z."/>
            <person name="Gu Z."/>
            <person name="Bruno D."/>
            <person name="Miranda M."/>
            <person name="Nguyen M."/>
            <person name="Wilhelmy J."/>
            <person name="Komp C."/>
            <person name="Tamse R."/>
            <person name="Wang X."/>
            <person name="Jia P."/>
            <person name="Luedi P."/>
            <person name="Oefner P.J."/>
            <person name="David L."/>
            <person name="Dietrich F.S."/>
            <person name="Li Y."/>
            <person name="Davis R.W."/>
            <person name="Steinmetz L.M."/>
        </authorList>
    </citation>
    <scope>NUCLEOTIDE SEQUENCE [LARGE SCALE GENOMIC DNA]</scope>
    <source>
        <strain>YJM789</strain>
    </source>
</reference>
<dbReference type="EMBL" id="AAFW02000021">
    <property type="protein sequence ID" value="EDN64140.1"/>
    <property type="molecule type" value="Genomic_DNA"/>
</dbReference>
<dbReference type="SMR" id="A6ZMR6"/>
<dbReference type="HOGENOM" id="CLU_056604_0_0_1"/>
<dbReference type="OrthoDB" id="40078at4893"/>
<dbReference type="Proteomes" id="UP000007060">
    <property type="component" value="Unassembled WGS sequence"/>
</dbReference>
<dbReference type="GO" id="GO:0005780">
    <property type="term" value="C:extrinsic component of intraperoxisomal membrane"/>
    <property type="evidence" value="ECO:0007669"/>
    <property type="project" value="InterPro"/>
</dbReference>
<dbReference type="GO" id="GO:0045033">
    <property type="term" value="P:peroxisome inheritance"/>
    <property type="evidence" value="ECO:0007669"/>
    <property type="project" value="InterPro"/>
</dbReference>
<dbReference type="InterPro" id="IPR024758">
    <property type="entry name" value="Inp1"/>
</dbReference>
<dbReference type="Pfam" id="PF12634">
    <property type="entry name" value="Inp1"/>
    <property type="match status" value="1"/>
</dbReference>
<dbReference type="PRINTS" id="PR02103">
    <property type="entry name" value="INPROXISOME1"/>
</dbReference>
<sequence>MVLSRGETKKNSVRLTAKQEKKPQSTFQTLKQSLKLSNNKKLKQDSTQHSNDTNKSVKAKKNGTSSKKTGTQRKRISTQRFSLFTYGNVQVMNSFVPIHNDIPNSSCIRRNSQVSANNVTESSGVFFNDTQSQDSQNTIKLKPTSLMAKGPIEIYQICTGFDKLKENIAPFQKSSKASSHDGHVVNYLSIGRHGDIVHPVLPKLQITRLNGAGFKYFISFYNPERYWEIEFLPLISQSQSELENSVKAFENVISKICQFSHINEGATIGNNESLSDKFKLPPTSDIEPPNTEIINNDDDDDDDDDNYDDDDLNYLLDEEYEQGCTDNSFSVISNTCSNLNASFLYPSDPTDAVSISINEAFKNAIRRTAPVLNIPIAAPSIHSKQQNKRYSSYPFIDSPPYLQDRHRRFQRRSISGLGDL</sequence>
<comment type="function">
    <text evidence="1">Required for peroxisome inheritance.</text>
</comment>
<comment type="subcellular location">
    <subcellularLocation>
        <location evidence="1">Peroxisome membrane</location>
        <topology evidence="1">Peripheral membrane protein</topology>
    </subcellularLocation>
</comment>
<comment type="similarity">
    <text evidence="4">Belongs to the INP1 family.</text>
</comment>
<gene>
    <name type="primary">INP1</name>
    <name type="ORF">SCY_4382</name>
</gene>
<feature type="chain" id="PRO_0000308712" description="Inheritance of peroxisomes protein 1">
    <location>
        <begin position="1"/>
        <end position="420"/>
    </location>
</feature>
<feature type="region of interest" description="Disordered" evidence="3">
    <location>
        <begin position="1"/>
        <end position="75"/>
    </location>
</feature>
<feature type="region of interest" description="Disordered" evidence="3">
    <location>
        <begin position="273"/>
        <end position="309"/>
    </location>
</feature>
<feature type="compositionally biased region" description="Basic and acidic residues" evidence="3">
    <location>
        <begin position="1"/>
        <end position="10"/>
    </location>
</feature>
<feature type="compositionally biased region" description="Low complexity" evidence="3">
    <location>
        <begin position="30"/>
        <end position="39"/>
    </location>
</feature>
<feature type="compositionally biased region" description="Polar residues" evidence="3">
    <location>
        <begin position="45"/>
        <end position="56"/>
    </location>
</feature>
<feature type="compositionally biased region" description="Acidic residues" evidence="3">
    <location>
        <begin position="295"/>
        <end position="309"/>
    </location>
</feature>
<feature type="modified residue" description="Phosphoserine" evidence="2">
    <location>
        <position position="273"/>
    </location>
</feature>
<keyword id="KW-0472">Membrane</keyword>
<keyword id="KW-0576">Peroxisome</keyword>
<keyword id="KW-0597">Phosphoprotein</keyword>
<accession>A6ZMR6</accession>
<protein>
    <recommendedName>
        <fullName>Inheritance of peroxisomes protein 1</fullName>
    </recommendedName>
</protein>
<name>INP1_YEAS7</name>
<evidence type="ECO:0000250" key="1"/>
<evidence type="ECO:0000250" key="2">
    <source>
        <dbReference type="UniProtKB" id="Q03694"/>
    </source>
</evidence>
<evidence type="ECO:0000256" key="3">
    <source>
        <dbReference type="SAM" id="MobiDB-lite"/>
    </source>
</evidence>
<evidence type="ECO:0000305" key="4"/>